<name>LCN10_HUMAN</name>
<organism>
    <name type="scientific">Homo sapiens</name>
    <name type="common">Human</name>
    <dbReference type="NCBI Taxonomy" id="9606"/>
    <lineage>
        <taxon>Eukaryota</taxon>
        <taxon>Metazoa</taxon>
        <taxon>Chordata</taxon>
        <taxon>Craniata</taxon>
        <taxon>Vertebrata</taxon>
        <taxon>Euteleostomi</taxon>
        <taxon>Mammalia</taxon>
        <taxon>Eutheria</taxon>
        <taxon>Euarchontoglires</taxon>
        <taxon>Primates</taxon>
        <taxon>Haplorrhini</taxon>
        <taxon>Catarrhini</taxon>
        <taxon>Hominidae</taxon>
        <taxon>Homo</taxon>
    </lineage>
</organism>
<gene>
    <name type="primary">LCN10</name>
</gene>
<accession>Q6JVE6</accession>
<accession>A2RUU3</accession>
<accession>B0QZ79</accession>
<protein>
    <recommendedName>
        <fullName>Epididymal-specific lipocalin-10</fullName>
    </recommendedName>
</protein>
<feature type="signal peptide" evidence="2">
    <location>
        <begin position="1"/>
        <end position="19"/>
    </location>
</feature>
<feature type="chain" id="PRO_0000017920" description="Epididymal-specific lipocalin-10">
    <location>
        <begin position="20"/>
        <end position="187"/>
    </location>
</feature>
<feature type="modified residue" description="N6-acetyllysine" evidence="5">
    <location>
        <position position="170"/>
    </location>
</feature>
<feature type="glycosylation site" description="N-linked (GlcNAc...) asparagine" evidence="2">
    <location>
        <position position="149"/>
    </location>
</feature>
<feature type="disulfide bond" evidence="1">
    <location>
        <begin position="90"/>
        <end position="163"/>
    </location>
</feature>
<feature type="splice variant" id="VSP_040220" description="In isoform 2." evidence="3">
    <original>GQGCGRAQPRHPGTSGHLWASLS</original>
    <variation>LKGCQSQEVILRKDGKKPVFGNACAYAAGPREGQEG</variation>
    <location>
        <begin position="87"/>
        <end position="109"/>
    </location>
</feature>
<sequence length="187" mass="20759">MRQGLLVLALVLVLVLVLAAGSQVQEWYPRESHALNWNKFSGFWYILATATDAQGFLPARDKRKLGASVVKVNKVGQLRVLLAFRRGQGCGRAQPRHPGTSGHLWASLSVKGVKAFHVLSTDYSYGLVYLRLGRATQNYKNLLLFHRQNVSSFQSLKEFMDACDILGLSKAAVILPKDASRTHTILP</sequence>
<proteinExistence type="evidence at protein level"/>
<comment type="function">
    <text>May play a role in male fertility. May act as a retinoid carrier protein within the epididymis.</text>
</comment>
<comment type="subcellular location">
    <subcellularLocation>
        <location evidence="4">Secreted</location>
    </subcellularLocation>
</comment>
<comment type="alternative products">
    <event type="alternative splicing"/>
    <isoform>
        <id>Q6JVE6-1</id>
        <name>1</name>
        <sequence type="displayed"/>
    </isoform>
    <isoform>
        <id>Q6JVE6-2</id>
        <name>2</name>
        <sequence type="described" ref="VSP_040220"/>
    </isoform>
</comment>
<comment type="similarity">
    <text evidence="4">Belongs to the calycin superfamily. Lipocalin family.</text>
</comment>
<reference key="1">
    <citation type="journal article" date="2004" name="Gene">
        <title>Molecular evolution of epididymal lipocalin genes localized on mouse chromosome 2.</title>
        <authorList>
            <person name="Suzuki K."/>
            <person name="Lareyre J.-J."/>
            <person name="Sanchez D."/>
            <person name="Gutierrez G."/>
            <person name="Araki Y."/>
            <person name="Matusik R.J."/>
            <person name="Orgebin-Crist M.-C."/>
        </authorList>
    </citation>
    <scope>NUCLEOTIDE SEQUENCE [MRNA] (ISOFORM 1)</scope>
</reference>
<reference key="2">
    <citation type="journal article" date="2004" name="Nature">
        <title>DNA sequence and analysis of human chromosome 9.</title>
        <authorList>
            <person name="Humphray S.J."/>
            <person name="Oliver K."/>
            <person name="Hunt A.R."/>
            <person name="Plumb R.W."/>
            <person name="Loveland J.E."/>
            <person name="Howe K.L."/>
            <person name="Andrews T.D."/>
            <person name="Searle S."/>
            <person name="Hunt S.E."/>
            <person name="Scott C.E."/>
            <person name="Jones M.C."/>
            <person name="Ainscough R."/>
            <person name="Almeida J.P."/>
            <person name="Ambrose K.D."/>
            <person name="Ashwell R.I.S."/>
            <person name="Babbage A.K."/>
            <person name="Babbage S."/>
            <person name="Bagguley C.L."/>
            <person name="Bailey J."/>
            <person name="Banerjee R."/>
            <person name="Barker D.J."/>
            <person name="Barlow K.F."/>
            <person name="Bates K."/>
            <person name="Beasley H."/>
            <person name="Beasley O."/>
            <person name="Bird C.P."/>
            <person name="Bray-Allen S."/>
            <person name="Brown A.J."/>
            <person name="Brown J.Y."/>
            <person name="Burford D."/>
            <person name="Burrill W."/>
            <person name="Burton J."/>
            <person name="Carder C."/>
            <person name="Carter N.P."/>
            <person name="Chapman J.C."/>
            <person name="Chen Y."/>
            <person name="Clarke G."/>
            <person name="Clark S.Y."/>
            <person name="Clee C.M."/>
            <person name="Clegg S."/>
            <person name="Collier R.E."/>
            <person name="Corby N."/>
            <person name="Crosier M."/>
            <person name="Cummings A.T."/>
            <person name="Davies J."/>
            <person name="Dhami P."/>
            <person name="Dunn M."/>
            <person name="Dutta I."/>
            <person name="Dyer L.W."/>
            <person name="Earthrowl M.E."/>
            <person name="Faulkner L."/>
            <person name="Fleming C.J."/>
            <person name="Frankish A."/>
            <person name="Frankland J.A."/>
            <person name="French L."/>
            <person name="Fricker D.G."/>
            <person name="Garner P."/>
            <person name="Garnett J."/>
            <person name="Ghori J."/>
            <person name="Gilbert J.G.R."/>
            <person name="Glison C."/>
            <person name="Grafham D.V."/>
            <person name="Gribble S."/>
            <person name="Griffiths C."/>
            <person name="Griffiths-Jones S."/>
            <person name="Grocock R."/>
            <person name="Guy J."/>
            <person name="Hall R.E."/>
            <person name="Hammond S."/>
            <person name="Harley J.L."/>
            <person name="Harrison E.S.I."/>
            <person name="Hart E.A."/>
            <person name="Heath P.D."/>
            <person name="Henderson C.D."/>
            <person name="Hopkins B.L."/>
            <person name="Howard P.J."/>
            <person name="Howden P.J."/>
            <person name="Huckle E."/>
            <person name="Johnson C."/>
            <person name="Johnson D."/>
            <person name="Joy A.A."/>
            <person name="Kay M."/>
            <person name="Keenan S."/>
            <person name="Kershaw J.K."/>
            <person name="Kimberley A.M."/>
            <person name="King A."/>
            <person name="Knights A."/>
            <person name="Laird G.K."/>
            <person name="Langford C."/>
            <person name="Lawlor S."/>
            <person name="Leongamornlert D.A."/>
            <person name="Leversha M."/>
            <person name="Lloyd C."/>
            <person name="Lloyd D.M."/>
            <person name="Lovell J."/>
            <person name="Martin S."/>
            <person name="Mashreghi-Mohammadi M."/>
            <person name="Matthews L."/>
            <person name="McLaren S."/>
            <person name="McLay K.E."/>
            <person name="McMurray A."/>
            <person name="Milne S."/>
            <person name="Nickerson T."/>
            <person name="Nisbett J."/>
            <person name="Nordsiek G."/>
            <person name="Pearce A.V."/>
            <person name="Peck A.I."/>
            <person name="Porter K.M."/>
            <person name="Pandian R."/>
            <person name="Pelan S."/>
            <person name="Phillimore B."/>
            <person name="Povey S."/>
            <person name="Ramsey Y."/>
            <person name="Rand V."/>
            <person name="Scharfe M."/>
            <person name="Sehra H.K."/>
            <person name="Shownkeen R."/>
            <person name="Sims S.K."/>
            <person name="Skuce C.D."/>
            <person name="Smith M."/>
            <person name="Steward C.A."/>
            <person name="Swarbreck D."/>
            <person name="Sycamore N."/>
            <person name="Tester J."/>
            <person name="Thorpe A."/>
            <person name="Tracey A."/>
            <person name="Tromans A."/>
            <person name="Thomas D.W."/>
            <person name="Wall M."/>
            <person name="Wallis J.M."/>
            <person name="West A.P."/>
            <person name="Whitehead S.L."/>
            <person name="Willey D.L."/>
            <person name="Williams S.A."/>
            <person name="Wilming L."/>
            <person name="Wray P.W."/>
            <person name="Young L."/>
            <person name="Ashurst J.L."/>
            <person name="Coulson A."/>
            <person name="Blocker H."/>
            <person name="Durbin R.M."/>
            <person name="Sulston J.E."/>
            <person name="Hubbard T."/>
            <person name="Jackson M.J."/>
            <person name="Bentley D.R."/>
            <person name="Beck S."/>
            <person name="Rogers J."/>
            <person name="Dunham I."/>
        </authorList>
    </citation>
    <scope>NUCLEOTIDE SEQUENCE [LARGE SCALE GENOMIC DNA]</scope>
</reference>
<reference key="3">
    <citation type="journal article" date="2004" name="Genome Res.">
        <title>The status, quality, and expansion of the NIH full-length cDNA project: the Mammalian Gene Collection (MGC).</title>
        <authorList>
            <consortium name="The MGC Project Team"/>
        </authorList>
    </citation>
    <scope>NUCLEOTIDE SEQUENCE [LARGE SCALE MRNA] (ISOFORM 2)</scope>
</reference>
<reference key="4">
    <citation type="journal article" date="2009" name="Anal. Chem.">
        <title>Lys-N and trypsin cover complementary parts of the phosphoproteome in a refined SCX-based approach.</title>
        <authorList>
            <person name="Gauci S."/>
            <person name="Helbig A.O."/>
            <person name="Slijper M."/>
            <person name="Krijgsveld J."/>
            <person name="Heck A.J."/>
            <person name="Mohammed S."/>
        </authorList>
    </citation>
    <scope>ACETYLATION [LARGE SCALE ANALYSIS] AT LYS-170</scope>
    <scope>IDENTIFICATION BY MASS SPECTROMETRY [LARGE SCALE ANALYSIS]</scope>
</reference>
<keyword id="KW-0007">Acetylation</keyword>
<keyword id="KW-0025">Alternative splicing</keyword>
<keyword id="KW-1015">Disulfide bond</keyword>
<keyword id="KW-0325">Glycoprotein</keyword>
<keyword id="KW-1185">Reference proteome</keyword>
<keyword id="KW-0964">Secreted</keyword>
<keyword id="KW-0732">Signal</keyword>
<keyword id="KW-0813">Transport</keyword>
<evidence type="ECO:0000250" key="1"/>
<evidence type="ECO:0000255" key="2"/>
<evidence type="ECO:0000303" key="3">
    <source>
    </source>
</evidence>
<evidence type="ECO:0000305" key="4"/>
<evidence type="ECO:0007744" key="5">
    <source>
    </source>
</evidence>
<dbReference type="EMBL" id="AY301271">
    <property type="protein sequence ID" value="AAQ81976.1"/>
    <property type="molecule type" value="mRNA"/>
</dbReference>
<dbReference type="EMBL" id="AL355987">
    <property type="status" value="NOT_ANNOTATED_CDS"/>
    <property type="molecule type" value="Genomic_DNA"/>
</dbReference>
<dbReference type="EMBL" id="BC133045">
    <property type="protein sequence ID" value="AAI33046.1"/>
    <property type="molecule type" value="mRNA"/>
</dbReference>
<dbReference type="CCDS" id="CCDS35182.2">
    <molecule id="Q6JVE6-2"/>
</dbReference>
<dbReference type="CCDS" id="CCDS94536.1">
    <molecule id="Q6JVE6-1"/>
</dbReference>
<dbReference type="RefSeq" id="NP_001001712.2">
    <molecule id="Q6JVE6-2"/>
    <property type="nucleotide sequence ID" value="NM_001001712.3"/>
</dbReference>
<dbReference type="RefSeq" id="NP_001355018.1">
    <molecule id="Q6JVE6-1"/>
    <property type="nucleotide sequence ID" value="NM_001368089.1"/>
</dbReference>
<dbReference type="SMR" id="Q6JVE6"/>
<dbReference type="BioGRID" id="136065">
    <property type="interactions" value="1"/>
</dbReference>
<dbReference type="STRING" id="9606.ENSP00000418491"/>
<dbReference type="GlyCosmos" id="Q6JVE6">
    <property type="glycosylation" value="1 site, No reported glycans"/>
</dbReference>
<dbReference type="GlyGen" id="Q6JVE6">
    <property type="glycosylation" value="1 site"/>
</dbReference>
<dbReference type="iPTMnet" id="Q6JVE6"/>
<dbReference type="BioMuta" id="LCN10"/>
<dbReference type="DMDM" id="62286922"/>
<dbReference type="Antibodypedia" id="53298">
    <property type="antibodies" value="55 antibodies from 14 providers"/>
</dbReference>
<dbReference type="DNASU" id="414332"/>
<dbReference type="Ensembl" id="ENST00000474369.1">
    <molecule id="Q6JVE6-1"/>
    <property type="protein sequence ID" value="ENSP00000420564.1"/>
    <property type="gene ID" value="ENSG00000187922.14"/>
</dbReference>
<dbReference type="Ensembl" id="ENST00000497771.6">
    <molecule id="Q6JVE6-2"/>
    <property type="protein sequence ID" value="ENSP00000418491.1"/>
    <property type="gene ID" value="ENSG00000187922.14"/>
</dbReference>
<dbReference type="GeneID" id="414332"/>
<dbReference type="KEGG" id="hsa:414332"/>
<dbReference type="MANE-Select" id="ENST00000497771.6">
    <molecule id="Q6JVE6-2"/>
    <property type="protein sequence ID" value="ENSP00000418491.1"/>
    <property type="RefSeq nucleotide sequence ID" value="NM_001001712.3"/>
    <property type="RefSeq protein sequence ID" value="NP_001001712.2"/>
</dbReference>
<dbReference type="UCSC" id="uc004civ.4">
    <molecule id="Q6JVE6-1"/>
    <property type="organism name" value="human"/>
</dbReference>
<dbReference type="AGR" id="HGNC:20892"/>
<dbReference type="CTD" id="414332"/>
<dbReference type="DisGeNET" id="414332"/>
<dbReference type="GeneCards" id="LCN10"/>
<dbReference type="HGNC" id="HGNC:20892">
    <property type="gene designation" value="LCN10"/>
</dbReference>
<dbReference type="HPA" id="ENSG00000187922">
    <property type="expression patterns" value="Tissue enhanced (epididymis)"/>
</dbReference>
<dbReference type="MIM" id="612904">
    <property type="type" value="gene"/>
</dbReference>
<dbReference type="neXtProt" id="NX_Q6JVE6"/>
<dbReference type="OpenTargets" id="ENSG00000187922"/>
<dbReference type="PharmGKB" id="PA134942375"/>
<dbReference type="VEuPathDB" id="HostDB:ENSG00000187922"/>
<dbReference type="GeneTree" id="ENSGT01050000244868"/>
<dbReference type="HOGENOM" id="CLU_130468_0_0_1"/>
<dbReference type="InParanoid" id="Q6JVE6"/>
<dbReference type="OMA" id="SWTQEFF"/>
<dbReference type="OrthoDB" id="9834950at2759"/>
<dbReference type="PAN-GO" id="Q6JVE6">
    <property type="GO annotations" value="0 GO annotations based on evolutionary models"/>
</dbReference>
<dbReference type="PhylomeDB" id="Q6JVE6"/>
<dbReference type="TreeFam" id="TF336103"/>
<dbReference type="PathwayCommons" id="Q6JVE6"/>
<dbReference type="BioGRID-ORCS" id="414332">
    <property type="hits" value="108 hits in 1145 CRISPR screens"/>
</dbReference>
<dbReference type="ChiTaRS" id="LCN10">
    <property type="organism name" value="human"/>
</dbReference>
<dbReference type="GenomeRNAi" id="414332"/>
<dbReference type="Pharos" id="Q6JVE6">
    <property type="development level" value="Tdark"/>
</dbReference>
<dbReference type="PRO" id="PR:Q6JVE6"/>
<dbReference type="Proteomes" id="UP000005640">
    <property type="component" value="Chromosome 9"/>
</dbReference>
<dbReference type="RNAct" id="Q6JVE6">
    <property type="molecule type" value="protein"/>
</dbReference>
<dbReference type="Bgee" id="ENSG00000187922">
    <property type="expression patterns" value="Expressed in male germ line stem cell (sensu Vertebrata) in testis and 92 other cell types or tissues"/>
</dbReference>
<dbReference type="ExpressionAtlas" id="Q6JVE6">
    <property type="expression patterns" value="baseline and differential"/>
</dbReference>
<dbReference type="GO" id="GO:0005576">
    <property type="term" value="C:extracellular region"/>
    <property type="evidence" value="ECO:0007669"/>
    <property type="project" value="UniProtKB-SubCell"/>
</dbReference>
<dbReference type="GO" id="GO:0036094">
    <property type="term" value="F:small molecule binding"/>
    <property type="evidence" value="ECO:0007669"/>
    <property type="project" value="InterPro"/>
</dbReference>
<dbReference type="GO" id="GO:0007507">
    <property type="term" value="P:heart development"/>
    <property type="evidence" value="ECO:0007669"/>
    <property type="project" value="Ensembl"/>
</dbReference>
<dbReference type="GO" id="GO:0006954">
    <property type="term" value="P:inflammatory response"/>
    <property type="evidence" value="ECO:0007669"/>
    <property type="project" value="Ensembl"/>
</dbReference>
<dbReference type="GO" id="GO:0042116">
    <property type="term" value="P:macrophage activation"/>
    <property type="evidence" value="ECO:0007669"/>
    <property type="project" value="Ensembl"/>
</dbReference>
<dbReference type="GO" id="GO:0032496">
    <property type="term" value="P:response to lipopolysaccharide"/>
    <property type="evidence" value="ECO:0007669"/>
    <property type="project" value="Ensembl"/>
</dbReference>
<dbReference type="GO" id="GO:0034341">
    <property type="term" value="P:response to type II interferon"/>
    <property type="evidence" value="ECO:0007669"/>
    <property type="project" value="Ensembl"/>
</dbReference>
<dbReference type="GO" id="GO:0010165">
    <property type="term" value="P:response to X-ray"/>
    <property type="evidence" value="ECO:0007669"/>
    <property type="project" value="Ensembl"/>
</dbReference>
<dbReference type="CDD" id="cd19425">
    <property type="entry name" value="lipocalin_10-like"/>
    <property type="match status" value="1"/>
</dbReference>
<dbReference type="Gene3D" id="2.40.128.20">
    <property type="match status" value="1"/>
</dbReference>
<dbReference type="InterPro" id="IPR012674">
    <property type="entry name" value="Calycin"/>
</dbReference>
<dbReference type="InterPro" id="IPR002345">
    <property type="entry name" value="Lipocalin"/>
</dbReference>
<dbReference type="InterPro" id="IPR022272">
    <property type="entry name" value="Lipocalin_CS"/>
</dbReference>
<dbReference type="PANTHER" id="PTHR11430:SF79">
    <property type="entry name" value="EPIDIDYMAL-SPECIFIC LIPOCALIN-10"/>
    <property type="match status" value="1"/>
</dbReference>
<dbReference type="PANTHER" id="PTHR11430">
    <property type="entry name" value="LIPOCALIN"/>
    <property type="match status" value="1"/>
</dbReference>
<dbReference type="SUPFAM" id="SSF50814">
    <property type="entry name" value="Lipocalins"/>
    <property type="match status" value="1"/>
</dbReference>
<dbReference type="PROSITE" id="PS00213">
    <property type="entry name" value="LIPOCALIN"/>
    <property type="match status" value="1"/>
</dbReference>